<sequence>MVPKQKTHSGAKKRFKLTGSGSVSRARAGMRHNFEHRSSRVTRRLTGRQFVSDADSKLARKLLGK</sequence>
<keyword id="KW-1185">Reference proteome</keyword>
<keyword id="KW-0687">Ribonucleoprotein</keyword>
<keyword id="KW-0689">Ribosomal protein</keyword>
<organism>
    <name type="scientific">Tropheryma whipplei (strain Twist)</name>
    <name type="common">Whipple's bacillus</name>
    <dbReference type="NCBI Taxonomy" id="203267"/>
    <lineage>
        <taxon>Bacteria</taxon>
        <taxon>Bacillati</taxon>
        <taxon>Actinomycetota</taxon>
        <taxon>Actinomycetes</taxon>
        <taxon>Micrococcales</taxon>
        <taxon>Tropherymataceae</taxon>
        <taxon>Tropheryma</taxon>
    </lineage>
</organism>
<proteinExistence type="inferred from homology"/>
<name>RL35_TROWT</name>
<comment type="similarity">
    <text evidence="1">Belongs to the bacterial ribosomal protein bL35 family.</text>
</comment>
<accession>Q83GT1</accession>
<feature type="chain" id="PRO_0000177449" description="Large ribosomal subunit protein bL35">
    <location>
        <begin position="1"/>
        <end position="65"/>
    </location>
</feature>
<feature type="region of interest" description="Disordered" evidence="2">
    <location>
        <begin position="1"/>
        <end position="39"/>
    </location>
</feature>
<feature type="compositionally biased region" description="Basic residues" evidence="2">
    <location>
        <begin position="1"/>
        <end position="16"/>
    </location>
</feature>
<gene>
    <name evidence="1" type="primary">rpmI</name>
    <name type="ordered locus">TWT_165</name>
</gene>
<reference key="1">
    <citation type="journal article" date="2003" name="Genome Res.">
        <title>Tropheryma whipplei twist: a human pathogenic Actinobacteria with a reduced genome.</title>
        <authorList>
            <person name="Raoult D."/>
            <person name="Ogata H."/>
            <person name="Audic S."/>
            <person name="Robert C."/>
            <person name="Suhre K."/>
            <person name="Drancourt M."/>
            <person name="Claverie J.-M."/>
        </authorList>
    </citation>
    <scope>NUCLEOTIDE SEQUENCE [LARGE SCALE GENOMIC DNA]</scope>
    <source>
        <strain>Twist</strain>
    </source>
</reference>
<evidence type="ECO:0000255" key="1">
    <source>
        <dbReference type="HAMAP-Rule" id="MF_00514"/>
    </source>
</evidence>
<evidence type="ECO:0000256" key="2">
    <source>
        <dbReference type="SAM" id="MobiDB-lite"/>
    </source>
</evidence>
<evidence type="ECO:0000305" key="3"/>
<protein>
    <recommendedName>
        <fullName evidence="1">Large ribosomal subunit protein bL35</fullName>
    </recommendedName>
    <alternativeName>
        <fullName evidence="3">50S ribosomal protein L35</fullName>
    </alternativeName>
</protein>
<dbReference type="EMBL" id="AE014184">
    <property type="protein sequence ID" value="AAO44262.1"/>
    <property type="molecule type" value="Genomic_DNA"/>
</dbReference>
<dbReference type="SMR" id="Q83GT1"/>
<dbReference type="STRING" id="203267.TWT_165"/>
<dbReference type="KEGG" id="twh:TWT_165"/>
<dbReference type="eggNOG" id="COG0291">
    <property type="taxonomic scope" value="Bacteria"/>
</dbReference>
<dbReference type="HOGENOM" id="CLU_169643_4_2_11"/>
<dbReference type="Proteomes" id="UP000002200">
    <property type="component" value="Chromosome"/>
</dbReference>
<dbReference type="GO" id="GO:0022625">
    <property type="term" value="C:cytosolic large ribosomal subunit"/>
    <property type="evidence" value="ECO:0007669"/>
    <property type="project" value="TreeGrafter"/>
</dbReference>
<dbReference type="GO" id="GO:0003735">
    <property type="term" value="F:structural constituent of ribosome"/>
    <property type="evidence" value="ECO:0007669"/>
    <property type="project" value="InterPro"/>
</dbReference>
<dbReference type="GO" id="GO:0006412">
    <property type="term" value="P:translation"/>
    <property type="evidence" value="ECO:0007669"/>
    <property type="project" value="UniProtKB-UniRule"/>
</dbReference>
<dbReference type="FunFam" id="4.10.410.60:FF:000001">
    <property type="entry name" value="50S ribosomal protein L35"/>
    <property type="match status" value="1"/>
</dbReference>
<dbReference type="Gene3D" id="4.10.410.60">
    <property type="match status" value="1"/>
</dbReference>
<dbReference type="HAMAP" id="MF_00514">
    <property type="entry name" value="Ribosomal_bL35"/>
    <property type="match status" value="1"/>
</dbReference>
<dbReference type="InterPro" id="IPR001706">
    <property type="entry name" value="Ribosomal_bL35"/>
</dbReference>
<dbReference type="InterPro" id="IPR021137">
    <property type="entry name" value="Ribosomal_bL35-like"/>
</dbReference>
<dbReference type="InterPro" id="IPR018265">
    <property type="entry name" value="Ribosomal_bL35_CS"/>
</dbReference>
<dbReference type="InterPro" id="IPR037229">
    <property type="entry name" value="Ribosomal_bL35_sf"/>
</dbReference>
<dbReference type="NCBIfam" id="TIGR00001">
    <property type="entry name" value="rpmI_bact"/>
    <property type="match status" value="1"/>
</dbReference>
<dbReference type="PANTHER" id="PTHR33343">
    <property type="entry name" value="54S RIBOSOMAL PROTEIN BL35M"/>
    <property type="match status" value="1"/>
</dbReference>
<dbReference type="PANTHER" id="PTHR33343:SF1">
    <property type="entry name" value="LARGE RIBOSOMAL SUBUNIT PROTEIN BL35M"/>
    <property type="match status" value="1"/>
</dbReference>
<dbReference type="Pfam" id="PF01632">
    <property type="entry name" value="Ribosomal_L35p"/>
    <property type="match status" value="1"/>
</dbReference>
<dbReference type="PRINTS" id="PR00064">
    <property type="entry name" value="RIBOSOMALL35"/>
</dbReference>
<dbReference type="SUPFAM" id="SSF143034">
    <property type="entry name" value="L35p-like"/>
    <property type="match status" value="1"/>
</dbReference>
<dbReference type="PROSITE" id="PS00936">
    <property type="entry name" value="RIBOSOMAL_L35"/>
    <property type="match status" value="1"/>
</dbReference>